<proteinExistence type="inferred from homology"/>
<gene>
    <name evidence="1" type="primary">dapH</name>
    <name type="ordered locus">Cbei_1791</name>
</gene>
<protein>
    <recommendedName>
        <fullName evidence="1">2,3,4,5-tetrahydropyridine-2,6-dicarboxylate N-acetyltransferase</fullName>
        <ecNumber evidence="1">2.3.1.89</ecNumber>
    </recommendedName>
    <alternativeName>
        <fullName evidence="1">Tetrahydrodipicolinate N-acetyltransferase</fullName>
        <shortName evidence="1">THP acetyltransferase</shortName>
        <shortName evidence="1">Tetrahydropicolinate acetylase</shortName>
    </alternativeName>
</protein>
<dbReference type="EC" id="2.3.1.89" evidence="1"/>
<dbReference type="EMBL" id="CP000721">
    <property type="protein sequence ID" value="ABR33962.1"/>
    <property type="molecule type" value="Genomic_DNA"/>
</dbReference>
<dbReference type="SMR" id="A6LUD2"/>
<dbReference type="KEGG" id="cbe:Cbei_1791"/>
<dbReference type="eggNOG" id="COG2171">
    <property type="taxonomic scope" value="Bacteria"/>
</dbReference>
<dbReference type="HOGENOM" id="CLU_103751_0_0_9"/>
<dbReference type="UniPathway" id="UPA00034">
    <property type="reaction ID" value="UER00022"/>
</dbReference>
<dbReference type="Proteomes" id="UP000000565">
    <property type="component" value="Chromosome"/>
</dbReference>
<dbReference type="GO" id="GO:0047200">
    <property type="term" value="F:tetrahydrodipicolinate N-acetyltransferase activity"/>
    <property type="evidence" value="ECO:0007669"/>
    <property type="project" value="UniProtKB-EC"/>
</dbReference>
<dbReference type="GO" id="GO:0019877">
    <property type="term" value="P:diaminopimelate biosynthetic process"/>
    <property type="evidence" value="ECO:0007669"/>
    <property type="project" value="UniProtKB-UniRule"/>
</dbReference>
<dbReference type="GO" id="GO:0009089">
    <property type="term" value="P:lysine biosynthetic process via diaminopimelate"/>
    <property type="evidence" value="ECO:0007669"/>
    <property type="project" value="UniProtKB-UniRule"/>
</dbReference>
<dbReference type="CDD" id="cd03350">
    <property type="entry name" value="LbH_THP_succinylT"/>
    <property type="match status" value="1"/>
</dbReference>
<dbReference type="Gene3D" id="2.160.10.10">
    <property type="entry name" value="Hexapeptide repeat proteins"/>
    <property type="match status" value="1"/>
</dbReference>
<dbReference type="Gene3D" id="3.30.70.250">
    <property type="entry name" value="Malonyl-CoA ACP transacylase, ACP-binding"/>
    <property type="match status" value="1"/>
</dbReference>
<dbReference type="HAMAP" id="MF_01691">
    <property type="entry name" value="DapH"/>
    <property type="match status" value="1"/>
</dbReference>
<dbReference type="InterPro" id="IPR019873">
    <property type="entry name" value="DapH"/>
</dbReference>
<dbReference type="InterPro" id="IPR013710">
    <property type="entry name" value="DapH_N"/>
</dbReference>
<dbReference type="InterPro" id="IPR001451">
    <property type="entry name" value="Hexapep"/>
</dbReference>
<dbReference type="InterPro" id="IPR018357">
    <property type="entry name" value="Hexapep_transf_CS"/>
</dbReference>
<dbReference type="InterPro" id="IPR050179">
    <property type="entry name" value="Trans_hexapeptide_repeat"/>
</dbReference>
<dbReference type="InterPro" id="IPR011004">
    <property type="entry name" value="Trimer_LpxA-like_sf"/>
</dbReference>
<dbReference type="NCBIfam" id="TIGR03532">
    <property type="entry name" value="DapD_Ac"/>
    <property type="match status" value="1"/>
</dbReference>
<dbReference type="PANTHER" id="PTHR43300:SF10">
    <property type="entry name" value="2,3,4,5-TETRAHYDROPYRIDINE-2,6-DICARBOXYLATE N-ACETYLTRANSFERASE"/>
    <property type="match status" value="1"/>
</dbReference>
<dbReference type="PANTHER" id="PTHR43300">
    <property type="entry name" value="ACETYLTRANSFERASE"/>
    <property type="match status" value="1"/>
</dbReference>
<dbReference type="Pfam" id="PF08503">
    <property type="entry name" value="DapH_N"/>
    <property type="match status" value="1"/>
</dbReference>
<dbReference type="Pfam" id="PF14602">
    <property type="entry name" value="Hexapep_2"/>
    <property type="match status" value="2"/>
</dbReference>
<dbReference type="SUPFAM" id="SSF51161">
    <property type="entry name" value="Trimeric LpxA-like enzymes"/>
    <property type="match status" value="1"/>
</dbReference>
<dbReference type="PROSITE" id="PS00101">
    <property type="entry name" value="HEXAPEP_TRANSFERASES"/>
    <property type="match status" value="1"/>
</dbReference>
<sequence length="236" mass="25143">MSYNLTDPYEIARFIKESKKSTPVKVYVNGDLSNAEMNDVEWYGSNGFYILMGESDSITKIVLDNKHLIKHFRIENDRRNSAIPMLDLLEVDARIEPGAIIRDKVTIGKNAVIMMGAVINIGAEIGDGTMVDMNAVVGARGQLGKNVHLGAGAVVAGVLEPPSKEPCMIGDNALIGANSVILEGVKIGAGSVVAAGSVVTEDVPDNVVVAGSPAKIIKAVDDKTKDKTQILDDLRK</sequence>
<organism>
    <name type="scientific">Clostridium beijerinckii (strain ATCC 51743 / NCIMB 8052)</name>
    <name type="common">Clostridium acetobutylicum</name>
    <dbReference type="NCBI Taxonomy" id="290402"/>
    <lineage>
        <taxon>Bacteria</taxon>
        <taxon>Bacillati</taxon>
        <taxon>Bacillota</taxon>
        <taxon>Clostridia</taxon>
        <taxon>Eubacteriales</taxon>
        <taxon>Clostridiaceae</taxon>
        <taxon>Clostridium</taxon>
    </lineage>
</organism>
<feature type="chain" id="PRO_0000376643" description="2,3,4,5-tetrahydropyridine-2,6-dicarboxylate N-acetyltransferase">
    <location>
        <begin position="1"/>
        <end position="236"/>
    </location>
</feature>
<accession>A6LUD2</accession>
<evidence type="ECO:0000255" key="1">
    <source>
        <dbReference type="HAMAP-Rule" id="MF_01691"/>
    </source>
</evidence>
<comment type="function">
    <text evidence="1">Catalyzes the transfer of an acetyl group from acetyl-CoA to tetrahydrodipicolinate.</text>
</comment>
<comment type="catalytic activity">
    <reaction evidence="1">
        <text>(S)-2,3,4,5-tetrahydrodipicolinate + acetyl-CoA + H2O = L-2-acetamido-6-oxoheptanedioate + CoA</text>
        <dbReference type="Rhea" id="RHEA:13085"/>
        <dbReference type="ChEBI" id="CHEBI:15377"/>
        <dbReference type="ChEBI" id="CHEBI:16845"/>
        <dbReference type="ChEBI" id="CHEBI:57287"/>
        <dbReference type="ChEBI" id="CHEBI:57288"/>
        <dbReference type="ChEBI" id="CHEBI:58117"/>
        <dbReference type="EC" id="2.3.1.89"/>
    </reaction>
</comment>
<comment type="pathway">
    <text evidence="1">Amino-acid biosynthesis; L-lysine biosynthesis via DAP pathway; LL-2,6-diaminopimelate from (S)-tetrahydrodipicolinate (acetylase route): step 1/3.</text>
</comment>
<comment type="similarity">
    <text evidence="1">Belongs to the transferase hexapeptide repeat family. DapH subfamily.</text>
</comment>
<reference key="1">
    <citation type="submission" date="2007-06" db="EMBL/GenBank/DDBJ databases">
        <title>Complete sequence of Clostridium beijerinckii NCIMB 8052.</title>
        <authorList>
            <consortium name="US DOE Joint Genome Institute"/>
            <person name="Copeland A."/>
            <person name="Lucas S."/>
            <person name="Lapidus A."/>
            <person name="Barry K."/>
            <person name="Detter J.C."/>
            <person name="Glavina del Rio T."/>
            <person name="Hammon N."/>
            <person name="Israni S."/>
            <person name="Dalin E."/>
            <person name="Tice H."/>
            <person name="Pitluck S."/>
            <person name="Sims D."/>
            <person name="Brettin T."/>
            <person name="Bruce D."/>
            <person name="Tapia R."/>
            <person name="Brainard J."/>
            <person name="Schmutz J."/>
            <person name="Larimer F."/>
            <person name="Land M."/>
            <person name="Hauser L."/>
            <person name="Kyrpides N."/>
            <person name="Mikhailova N."/>
            <person name="Bennet G."/>
            <person name="Cann I."/>
            <person name="Chen J.-S."/>
            <person name="Contreras A.L."/>
            <person name="Jones D."/>
            <person name="Kashket E."/>
            <person name="Mitchell W."/>
            <person name="Stoddard S."/>
            <person name="Schwarz W."/>
            <person name="Qureshi N."/>
            <person name="Young M."/>
            <person name="Shi Z."/>
            <person name="Ezeji T."/>
            <person name="White B."/>
            <person name="Blaschek H."/>
            <person name="Richardson P."/>
        </authorList>
    </citation>
    <scope>NUCLEOTIDE SEQUENCE [LARGE SCALE GENOMIC DNA]</scope>
    <source>
        <strain>ATCC 51743 / NCIMB 8052</strain>
    </source>
</reference>
<keyword id="KW-0012">Acyltransferase</keyword>
<keyword id="KW-0028">Amino-acid biosynthesis</keyword>
<keyword id="KW-0220">Diaminopimelate biosynthesis</keyword>
<keyword id="KW-0457">Lysine biosynthesis</keyword>
<keyword id="KW-0677">Repeat</keyword>
<keyword id="KW-0808">Transferase</keyword>
<name>DAPH_CLOB8</name>